<proteinExistence type="inferred from homology"/>
<protein>
    <recommendedName>
        <fullName>Apolipoprotein E</fullName>
        <shortName>Apo-E</shortName>
    </recommendedName>
</protein>
<feature type="signal peptide" evidence="3">
    <location>
        <begin position="1"/>
        <end position="18"/>
    </location>
</feature>
<feature type="chain" id="PRO_0000454014" description="Apolipoprotein E">
    <location>
        <begin position="19"/>
        <end position="298"/>
    </location>
</feature>
<feature type="repeat" description="1">
    <location>
        <begin position="74"/>
        <end position="95"/>
    </location>
</feature>
<feature type="repeat" description="2">
    <location>
        <begin position="96"/>
        <end position="117"/>
    </location>
</feature>
<feature type="repeat" description="3">
    <location>
        <begin position="118"/>
        <end position="139"/>
    </location>
</feature>
<feature type="repeat" description="4">
    <location>
        <begin position="140"/>
        <end position="161"/>
    </location>
</feature>
<feature type="repeat" description="5">
    <location>
        <begin position="162"/>
        <end position="183"/>
    </location>
</feature>
<feature type="repeat" description="8">
    <location>
        <begin position="223"/>
        <end position="244"/>
    </location>
</feature>
<feature type="region of interest" description="8 X 22 AA approximate tandem repeats">
    <location>
        <begin position="74"/>
        <end position="244"/>
    </location>
</feature>
<feature type="region of interest" description="LDL and other lipoprotein receptors binding" evidence="1">
    <location>
        <begin position="152"/>
        <end position="162"/>
    </location>
</feature>
<feature type="region of interest" description="Lipid-binding and lipoprotein association" evidence="1">
    <location>
        <begin position="204"/>
        <end position="272"/>
    </location>
</feature>
<feature type="region of interest" description="Specificity for association with VLDL" evidence="1">
    <location>
        <begin position="260"/>
        <end position="272"/>
    </location>
</feature>
<feature type="binding site" evidence="1">
    <location>
        <begin position="156"/>
        <end position="159"/>
    </location>
    <ligand>
        <name>heparin</name>
        <dbReference type="ChEBI" id="CHEBI:28304"/>
    </ligand>
</feature>
<feature type="binding site" evidence="1">
    <location>
        <begin position="218"/>
        <end position="225"/>
    </location>
    <ligand>
        <name>heparin</name>
        <dbReference type="ChEBI" id="CHEBI:28304"/>
    </ligand>
</feature>
<feature type="modified residue" description="Methionine sulfoxide" evidence="2">
    <location>
        <position position="137"/>
    </location>
</feature>
<feature type="modified residue" description="Phosphoserine" evidence="1">
    <location>
        <position position="141"/>
    </location>
</feature>
<organism>
    <name type="scientific">Hydrochoerus hydrochaeris</name>
    <name type="common">Capybara</name>
    <name type="synonym">Carpincho</name>
    <dbReference type="NCBI Taxonomy" id="10149"/>
    <lineage>
        <taxon>Eukaryota</taxon>
        <taxon>Metazoa</taxon>
        <taxon>Chordata</taxon>
        <taxon>Craniata</taxon>
        <taxon>Vertebrata</taxon>
        <taxon>Euteleostomi</taxon>
        <taxon>Mammalia</taxon>
        <taxon>Eutheria</taxon>
        <taxon>Euarchontoglires</taxon>
        <taxon>Glires</taxon>
        <taxon>Rodentia</taxon>
        <taxon>Hystricomorpha</taxon>
        <taxon>Hydrochaeridae</taxon>
        <taxon>Hydrochoerus</taxon>
    </lineage>
</organism>
<gene>
    <name type="primary">APOE</name>
</gene>
<dbReference type="EMBL" id="PVLA01002003">
    <property type="status" value="NOT_ANNOTATED_CDS"/>
    <property type="molecule type" value="Genomic_DNA"/>
</dbReference>
<dbReference type="SMR" id="P0DUZ0"/>
<dbReference type="OrthoDB" id="9048614at2759"/>
<dbReference type="GO" id="GO:0042627">
    <property type="term" value="C:chylomicron"/>
    <property type="evidence" value="ECO:0007669"/>
    <property type="project" value="UniProtKB-KW"/>
</dbReference>
<dbReference type="GO" id="GO:0070062">
    <property type="term" value="C:extracellular exosome"/>
    <property type="evidence" value="ECO:0000250"/>
    <property type="project" value="UniProtKB"/>
</dbReference>
<dbReference type="GO" id="GO:0034364">
    <property type="term" value="C:high-density lipoprotein particle"/>
    <property type="evidence" value="ECO:0007669"/>
    <property type="project" value="UniProtKB-KW"/>
</dbReference>
<dbReference type="GO" id="GO:0034362">
    <property type="term" value="C:low-density lipoprotein particle"/>
    <property type="evidence" value="ECO:0007669"/>
    <property type="project" value="TreeGrafter"/>
</dbReference>
<dbReference type="GO" id="GO:0097487">
    <property type="term" value="C:multivesicular body, internal vesicle"/>
    <property type="evidence" value="ECO:0000250"/>
    <property type="project" value="UniProtKB"/>
</dbReference>
<dbReference type="GO" id="GO:0034361">
    <property type="term" value="C:very-low-density lipoprotein particle"/>
    <property type="evidence" value="ECO:0007669"/>
    <property type="project" value="UniProtKB-KW"/>
</dbReference>
<dbReference type="GO" id="GO:0120020">
    <property type="term" value="F:cholesterol transfer activity"/>
    <property type="evidence" value="ECO:0007669"/>
    <property type="project" value="TreeGrafter"/>
</dbReference>
<dbReference type="GO" id="GO:0008201">
    <property type="term" value="F:heparin binding"/>
    <property type="evidence" value="ECO:0007669"/>
    <property type="project" value="UniProtKB-KW"/>
</dbReference>
<dbReference type="GO" id="GO:0060228">
    <property type="term" value="F:phosphatidylcholine-sterol O-acyltransferase activator activity"/>
    <property type="evidence" value="ECO:0007669"/>
    <property type="project" value="TreeGrafter"/>
</dbReference>
<dbReference type="GO" id="GO:0005543">
    <property type="term" value="F:phospholipid binding"/>
    <property type="evidence" value="ECO:0007669"/>
    <property type="project" value="TreeGrafter"/>
</dbReference>
<dbReference type="GO" id="GO:0055090">
    <property type="term" value="P:acylglycerol homeostasis"/>
    <property type="evidence" value="ECO:0007669"/>
    <property type="project" value="TreeGrafter"/>
</dbReference>
<dbReference type="GO" id="GO:0033344">
    <property type="term" value="P:cholesterol efflux"/>
    <property type="evidence" value="ECO:0007669"/>
    <property type="project" value="TreeGrafter"/>
</dbReference>
<dbReference type="GO" id="GO:0008203">
    <property type="term" value="P:cholesterol metabolic process"/>
    <property type="evidence" value="ECO:0007669"/>
    <property type="project" value="TreeGrafter"/>
</dbReference>
<dbReference type="GO" id="GO:0042157">
    <property type="term" value="P:lipoprotein metabolic process"/>
    <property type="evidence" value="ECO:0007669"/>
    <property type="project" value="InterPro"/>
</dbReference>
<dbReference type="GO" id="GO:0032438">
    <property type="term" value="P:melanosome organization"/>
    <property type="evidence" value="ECO:0000250"/>
    <property type="project" value="UniProtKB"/>
</dbReference>
<dbReference type="GO" id="GO:0033700">
    <property type="term" value="P:phospholipid efflux"/>
    <property type="evidence" value="ECO:0007669"/>
    <property type="project" value="TreeGrafter"/>
</dbReference>
<dbReference type="FunFam" id="1.20.120.20:FF:000002">
    <property type="entry name" value="Apolipoprotein E"/>
    <property type="match status" value="1"/>
</dbReference>
<dbReference type="FunFam" id="1.20.120.20:FF:000003">
    <property type="entry name" value="Apolipoprotein E"/>
    <property type="match status" value="1"/>
</dbReference>
<dbReference type="Gene3D" id="1.20.120.20">
    <property type="entry name" value="Apolipoprotein"/>
    <property type="match status" value="2"/>
</dbReference>
<dbReference type="InterPro" id="IPR000074">
    <property type="entry name" value="ApoA_E"/>
</dbReference>
<dbReference type="InterPro" id="IPR050163">
    <property type="entry name" value="Apolipoprotein_A1/A4/E"/>
</dbReference>
<dbReference type="PANTHER" id="PTHR18976">
    <property type="entry name" value="APOLIPOPROTEIN"/>
    <property type="match status" value="1"/>
</dbReference>
<dbReference type="PANTHER" id="PTHR18976:SF2">
    <property type="entry name" value="APOLIPOPROTEIN E"/>
    <property type="match status" value="1"/>
</dbReference>
<dbReference type="Pfam" id="PF01442">
    <property type="entry name" value="Apolipoprotein"/>
    <property type="match status" value="1"/>
</dbReference>
<dbReference type="SUPFAM" id="SSF58113">
    <property type="entry name" value="Apolipoprotein A-I"/>
    <property type="match status" value="1"/>
</dbReference>
<keyword id="KW-0162">Chylomicron</keyword>
<keyword id="KW-0967">Endosome</keyword>
<keyword id="KW-0272">Extracellular matrix</keyword>
<keyword id="KW-0325">Glycoprotein</keyword>
<keyword id="KW-0345">HDL</keyword>
<keyword id="KW-0358">Heparin-binding</keyword>
<keyword id="KW-0445">Lipid transport</keyword>
<keyword id="KW-0446">Lipid-binding</keyword>
<keyword id="KW-0558">Oxidation</keyword>
<keyword id="KW-0597">Phosphoprotein</keyword>
<keyword id="KW-0677">Repeat</keyword>
<keyword id="KW-0964">Secreted</keyword>
<keyword id="KW-0732">Signal</keyword>
<keyword id="KW-0813">Transport</keyword>
<keyword id="KW-0850">VLDL</keyword>
<accession>P0DUZ0</accession>
<evidence type="ECO:0000250" key="1">
    <source>
        <dbReference type="UniProtKB" id="P02649"/>
    </source>
</evidence>
<evidence type="ECO:0000250" key="2">
    <source>
        <dbReference type="UniProtKB" id="P08226"/>
    </source>
</evidence>
<evidence type="ECO:0000255" key="3"/>
<evidence type="ECO:0000305" key="4"/>
<name>APOE_HYDHY</name>
<sequence>MKILWAALVLTLLAGCRADVEPEVEVRETAVWQSGQPWELALSRFWDYLRWVQTLSDQVQEELLSSQVTQELTLLMEDTMKELKAYKSELEKEVGPMAEDTKARLSKELQGAQARLAGDMEEVRNRLSQYRSEVQAMLGQSSEELRARLASHLRKLRKRLQRDAEELQKRLAVYKAGAQEGAERGVSAIRERLGSLMEQGRLQALTSHPLRERAQAWGEQVRGRLEKVGSQARDRLEEVREQMEEVRVKVEEQTEAFQARLKSWFEPMVEDLRRQWAELIEKVQVAVGASTSPPSQKS</sequence>
<reference key="1">
    <citation type="submission" date="2018-02" db="EMBL/GenBank/DDBJ databases">
        <title>The 200 mammals project: sequencing genomes by a novel cost-effective method, yielding a high resolution annotation of the human genome.</title>
        <authorList>
            <person name="Johnson J."/>
            <person name="Muren E."/>
            <person name="Swofford R."/>
            <person name="Turner-Maier J."/>
            <person name="Marinescu V."/>
            <person name="Genereux D."/>
            <person name="Birren B."/>
            <person name="Karlsson E.K."/>
            <person name="Lindblad-Toh K."/>
        </authorList>
    </citation>
    <scope>NUCLEOTIDE SEQUENCE [LARGE SCALE GENOMIC DNA]</scope>
</reference>
<reference key="2">
    <citation type="unpublished observations" date="2021-07">
        <authorList>
            <person name="Puppione D.L."/>
        </authorList>
    </citation>
    <scope>IDENTIFICATION</scope>
</reference>
<comment type="function">
    <text evidence="1">APOE is an apolipoprotein, a protein associating with lipid particles, that mainly functions in lipoprotein-mediated lipid transport between organs via the plasma and interstitial fluids. APOE is a core component of plasma lipoproteins and is involved in their production, conversion and clearance. Apolipoproteins are amphipathic molecules that interact both with lipids of the lipoprotein particle core and the aqueous environment of the plasma. As such, APOE associates with chylomicrons, chylomicron remnants, very low density lipoproteins (VLDL) and intermediate density lipoproteins (IDL) but shows a preferential binding to high-density lipoproteins (HDL). It also binds a wide range of cellular receptors including the LDL receptor/LDLR, the LDL receptor-related proteins LRP1, LRP2 and LRP8 and the very low-density lipoprotein receptor/VLDLR that mediate the cellular uptake of the APOE-containing lipoprotein particles. Finally, APOE also has a heparin-binding activity and binds heparan-sulfate proteoglycans on the surface of cells, a property that supports the capture and the receptor-mediated uptake of APOE-containing lipoproteins by cells. A main function of APOE is to mediate lipoprotein clearance through the uptake of chylomicrons, VLDLs, and HDLs by hepatocytes. APOE is also involved in the biosynthesis by the liver of VLDLs as well as their uptake by peripheral tissues ensuring the delivery of triglycerides and energy storage in muscle, heart and adipose tissues. By participating in the lipoprotein-mediated distribution of lipids among tissues, APOE plays a critical role in plasma and tissues lipid homeostasis. APOE is also involved in two steps of reverse cholesterol transport, the HDLs-mediated transport of cholesterol from peripheral tissues to the liver, and thereby plays an important role in cholesterol homeostasis. First, it is functionally associated with ABCA1 in the biogenesis of HDLs in tissues. Second, it is enriched in circulating HDLs and mediates their uptake by hepatocytes. APOE also plays an important role in lipid transport in the central nervous system, regulating neuron survival and sprouting.</text>
</comment>
<comment type="subunit">
    <text evidence="1">Homotetramer. May interact with ABCA1; functionally associated with ABCA1 in the biogenesis of HDLs. May interact with APP/A4 amyloid-beta peptide; the interaction is extremely stable in vitro but its physiological significance is unclear. May interact with MAPT. May interact with MAP2. In the cerebrospinal fluid, interacts with secreted SORL1. Interacts with PMEL; this allows the loading of PMEL luminal fragment on ILVs to induce fibril nucleation.</text>
</comment>
<comment type="subcellular location">
    <subcellularLocation>
        <location evidence="1">Secreted</location>
    </subcellularLocation>
    <subcellularLocation>
        <location evidence="1">Secreted</location>
        <location evidence="1">Extracellular space</location>
    </subcellularLocation>
    <subcellularLocation>
        <location evidence="1">Secreted</location>
        <location evidence="1">Extracellular space</location>
        <location evidence="1">Extracellular matrix</location>
    </subcellularLocation>
    <subcellularLocation>
        <location evidence="1">Extracellular vesicle</location>
    </subcellularLocation>
    <subcellularLocation>
        <location evidence="1">Endosome</location>
        <location evidence="1">Multivesicular body</location>
    </subcellularLocation>
    <text evidence="1">In the plasma, APOE is associated with chylomicrons, chylomicrons remnants, VLDL, LDL and HDL lipoproteins. Lipid poor oligomeric APOE is associated with the extracellular matrix in a calcium- and heparan-sulfate proteoglycans-dependent manner. Lipidation induces the release from the extracellular matrix. Colocalizes with CD63 and PMEL at exosomes and in intraluminal vesicles within multivesicular endosomes.</text>
</comment>
<comment type="PTM">
    <text evidence="1">APOE exists as multiple glycosylated and sialylated glycoforms within cells and in plasma. The extent of glycosylation and sialylation are tissue and context specific.</text>
</comment>
<comment type="PTM">
    <text evidence="1">Glycated in plasma VLDL.</text>
</comment>
<comment type="PTM">
    <text evidence="1">Phosphorylated by FAM20C in the extracellular medium.</text>
</comment>
<comment type="similarity">
    <text evidence="4">Belongs to the apolipoprotein A1/A4/E family.</text>
</comment>